<protein>
    <recommendedName>
        <fullName evidence="4">Silphinene synthase peniA</fullName>
        <ecNumber evidence="3">4.2.3.-</ecNumber>
    </recommendedName>
    <alternativeName>
        <fullName evidence="4">Penifulvin A biosynthesis cluster protein A</fullName>
    </alternativeName>
    <alternativeName>
        <fullName evidence="4">Sesquiterpene cyclase</fullName>
    </alternativeName>
</protein>
<name>PENIA_PENPA</name>
<organism>
    <name type="scientific">Penicillium patulum</name>
    <name type="common">Penicillium griseofulvum</name>
    <dbReference type="NCBI Taxonomy" id="5078"/>
    <lineage>
        <taxon>Eukaryota</taxon>
        <taxon>Fungi</taxon>
        <taxon>Dikarya</taxon>
        <taxon>Ascomycota</taxon>
        <taxon>Pezizomycotina</taxon>
        <taxon>Eurotiomycetes</taxon>
        <taxon>Eurotiomycetidae</taxon>
        <taxon>Eurotiales</taxon>
        <taxon>Aspergillaceae</taxon>
        <taxon>Penicillium</taxon>
    </lineage>
</organism>
<feature type="chain" id="PRO_0000460296" description="Silphinene synthase peniA">
    <location>
        <begin position="1"/>
        <end position="372"/>
    </location>
</feature>
<feature type="short sequence motif" description="DDXXE motif" evidence="2">
    <location>
        <begin position="116"/>
        <end position="121"/>
    </location>
</feature>
<feature type="binding site" evidence="1">
    <location>
        <position position="116"/>
    </location>
    <ligand>
        <name>Mg(2+)</name>
        <dbReference type="ChEBI" id="CHEBI:18420"/>
        <label>1</label>
    </ligand>
</feature>
<feature type="binding site" evidence="1">
    <location>
        <position position="121"/>
    </location>
    <ligand>
        <name>Mg(2+)</name>
        <dbReference type="ChEBI" id="CHEBI:18420"/>
        <label>1</label>
    </ligand>
</feature>
<feature type="binding site" evidence="1">
    <location>
        <position position="121"/>
    </location>
    <ligand>
        <name>Mg(2+)</name>
        <dbReference type="ChEBI" id="CHEBI:18420"/>
        <label>2</label>
    </ligand>
</feature>
<feature type="binding site" evidence="1">
    <location>
        <position position="263"/>
    </location>
    <ligand>
        <name>Mg(2+)</name>
        <dbReference type="ChEBI" id="CHEBI:18420"/>
        <label>3</label>
    </ligand>
</feature>
<feature type="binding site" evidence="1">
    <location>
        <position position="267"/>
    </location>
    <ligand>
        <name>Mg(2+)</name>
        <dbReference type="ChEBI" id="CHEBI:18420"/>
        <label>3</label>
    </ligand>
</feature>
<feature type="binding site" evidence="1">
    <location>
        <position position="271"/>
    </location>
    <ligand>
        <name>Mg(2+)</name>
        <dbReference type="ChEBI" id="CHEBI:18420"/>
        <label>3</label>
    </ligand>
</feature>
<dbReference type="EC" id="4.2.3.-" evidence="3"/>
<dbReference type="EMBL" id="MK692947">
    <property type="protein sequence ID" value="QDO73502.1"/>
    <property type="molecule type" value="Genomic_DNA"/>
</dbReference>
<dbReference type="SMR" id="A0A516F405"/>
<dbReference type="UniPathway" id="UPA00213"/>
<dbReference type="GO" id="GO:0046872">
    <property type="term" value="F:metal ion binding"/>
    <property type="evidence" value="ECO:0007669"/>
    <property type="project" value="UniProtKB-KW"/>
</dbReference>
<dbReference type="GO" id="GO:0010333">
    <property type="term" value="F:terpene synthase activity"/>
    <property type="evidence" value="ECO:0007669"/>
    <property type="project" value="InterPro"/>
</dbReference>
<dbReference type="GO" id="GO:0008299">
    <property type="term" value="P:isoprenoid biosynthetic process"/>
    <property type="evidence" value="ECO:0007669"/>
    <property type="project" value="UniProtKB-ARBA"/>
</dbReference>
<dbReference type="Gene3D" id="1.10.600.10">
    <property type="entry name" value="Farnesyl Diphosphate Synthase"/>
    <property type="match status" value="1"/>
</dbReference>
<dbReference type="InterPro" id="IPR008949">
    <property type="entry name" value="Isoprenoid_synthase_dom_sf"/>
</dbReference>
<dbReference type="InterPro" id="IPR034686">
    <property type="entry name" value="Terpene_cyclase-like_2"/>
</dbReference>
<dbReference type="PANTHER" id="PTHR35201:SF4">
    <property type="entry name" value="BETA-PINACENE SYNTHASE-RELATED"/>
    <property type="match status" value="1"/>
</dbReference>
<dbReference type="PANTHER" id="PTHR35201">
    <property type="entry name" value="TERPENE SYNTHASE"/>
    <property type="match status" value="1"/>
</dbReference>
<dbReference type="Pfam" id="PF19086">
    <property type="entry name" value="Terpene_syn_C_2"/>
    <property type="match status" value="1"/>
</dbReference>
<dbReference type="SFLD" id="SFLDS00005">
    <property type="entry name" value="Isoprenoid_Synthase_Type_I"/>
    <property type="match status" value="1"/>
</dbReference>
<dbReference type="SFLD" id="SFLDG01020">
    <property type="entry name" value="Terpene_Cyclase_Like_2"/>
    <property type="match status" value="1"/>
</dbReference>
<dbReference type="SUPFAM" id="SSF48576">
    <property type="entry name" value="Terpenoid synthases"/>
    <property type="match status" value="1"/>
</dbReference>
<gene>
    <name evidence="4" type="primary">peniA</name>
</gene>
<evidence type="ECO:0000250" key="1">
    <source>
        <dbReference type="UniProtKB" id="B5HDJ6"/>
    </source>
</evidence>
<evidence type="ECO:0000250" key="2">
    <source>
        <dbReference type="UniProtKB" id="S0DX56"/>
    </source>
</evidence>
<evidence type="ECO:0000269" key="3">
    <source>
    </source>
</evidence>
<evidence type="ECO:0000303" key="4">
    <source>
    </source>
</evidence>
<evidence type="ECO:0000305" key="5"/>
<proteinExistence type="evidence at protein level"/>
<reference key="1">
    <citation type="journal article" date="2019" name="Angew. Chem. Int. Ed.">
        <title>Unprecedented [5.5.5.6]dioxafenestrane ring construction in fungal insecticidal sesquiterpene biosynthesis.</title>
        <authorList>
            <person name="Zeng H."/>
            <person name="Yin G."/>
            <person name="Wei Q."/>
            <person name="Li D."/>
            <person name="Wang Y."/>
            <person name="Hu Y."/>
            <person name="Hu C."/>
            <person name="Zou Y."/>
        </authorList>
    </citation>
    <scope>NUCLEOTIDE SEQUENCE [GENOMIC DNA]</scope>
    <scope>FUNCTION</scope>
    <scope>DISRUPTION PHENOTYPE</scope>
    <scope>CATALYTIC ACTIVITY</scope>
    <scope>PATHWAY</scope>
    <source>
        <strain>NRRL 35584</strain>
    </source>
</reference>
<keyword id="KW-0456">Lyase</keyword>
<keyword id="KW-0460">Magnesium</keyword>
<keyword id="KW-0479">Metal-binding</keyword>
<sequence>MEVIQPTTQIFADNEKTVSQVAEEISSNELRETTVYLPDLFVSFCSRAPKTNPYYAEVKAESDAWFAKLYSLSTEKELSRLTKADFALFAAWWTADAGKSEFRTICDWCNWVFYFDDQFDEGHLCEDEAKAQREADILTQIMTVGLRDDEYPDDLPRARALRYAFRSVWERISQRASAGVQRRFREAMQEFCKGLVGQVGVRADIDTRELDPYLAFRRQSIGVVPCIVFAEYYHDLRLPDEFFEHPSVKTIMDLAAEITVLHNDVLSYHKEYEMGAIHNIVIILRERGMTQQEAYNETDKLIQKRLREWHLAVNQLPFYGEALDLQVQKFVQACQEVAVGNLHWSFATERYFGNQNNLIRKTRQVELIDLKA</sequence>
<comment type="function">
    <text evidence="3">Sesquiterpene cyclase; part of the gene cluster that mediates the biosynthesis of penifulvin A, a potent insecticidal sesquiterpene that features a [5.5.5.6]dioxafenestrane ring (PubMed:30908782). Within the pathway, peniA catalyzes the first step and generates the angular triquinane scaffold silphinene via cyclization of the linear farnesyl pyrophosphate (FPP) (PubMed:30908782). The cytochrome P450 monooxygenase peniB and the flavin-dependent monooxygenase peniC then catalyze a series of oxidation reactions to transform silphinene into penifulvin A (PubMed:30908782).</text>
</comment>
<comment type="catalytic activity">
    <reaction evidence="3">
        <text>(2E,6E)-farnesyl diphosphate = silphinene + diphosphate</text>
        <dbReference type="Rhea" id="RHEA:78655"/>
        <dbReference type="ChEBI" id="CHEBI:33019"/>
        <dbReference type="ChEBI" id="CHEBI:175763"/>
        <dbReference type="ChEBI" id="CHEBI:229523"/>
    </reaction>
    <physiologicalReaction direction="left-to-right" evidence="3">
        <dbReference type="Rhea" id="RHEA:78656"/>
    </physiologicalReaction>
</comment>
<comment type="cofactor">
    <cofactor evidence="1">
        <name>Mg(2+)</name>
        <dbReference type="ChEBI" id="CHEBI:18420"/>
    </cofactor>
    <text evidence="1">Binds 3 Mg(2+) ions per subunit.</text>
</comment>
<comment type="pathway">
    <text evidence="3">Secondary metabolite biosynthesis; terpenoid biosynthesis.</text>
</comment>
<comment type="domain">
    <text evidence="5">The Asp-Asp-Xaa-Xaa-Glu (DDXXE) motif is important for the catalytic activity, presumably through binding to Mg(2+).</text>
</comment>
<comment type="disruption phenotype">
    <text evidence="3">Abolishes the production of penifulvin A.</text>
</comment>
<comment type="similarity">
    <text evidence="5">Belongs to the terpene synthase family.</text>
</comment>
<accession>A0A516F405</accession>